<keyword id="KW-0240">DNA-directed RNA polymerase</keyword>
<keyword id="KW-0548">Nucleotidyltransferase</keyword>
<keyword id="KW-0804">Transcription</keyword>
<keyword id="KW-0808">Transferase</keyword>
<gene>
    <name evidence="1" type="primary">rpoZ</name>
    <name type="ordered locus">BCG9842_B1274</name>
</gene>
<evidence type="ECO:0000255" key="1">
    <source>
        <dbReference type="HAMAP-Rule" id="MF_00366"/>
    </source>
</evidence>
<accession>B7IUM9</accession>
<protein>
    <recommendedName>
        <fullName evidence="1">DNA-directed RNA polymerase subunit omega</fullName>
        <shortName evidence="1">RNAP omega subunit</shortName>
        <ecNumber evidence="1">2.7.7.6</ecNumber>
    </recommendedName>
    <alternativeName>
        <fullName evidence="1">RNA polymerase omega subunit</fullName>
    </alternativeName>
    <alternativeName>
        <fullName evidence="1">Transcriptase subunit omega</fullName>
    </alternativeName>
</protein>
<sequence>MLNPSIDSLLQKIDSKYTLVTVAAKRAREMQLANNCVVEQPVSHKCVGKALEEIDAEVLSYVPSEDKVAE</sequence>
<organism>
    <name type="scientific">Bacillus cereus (strain G9842)</name>
    <dbReference type="NCBI Taxonomy" id="405531"/>
    <lineage>
        <taxon>Bacteria</taxon>
        <taxon>Bacillati</taxon>
        <taxon>Bacillota</taxon>
        <taxon>Bacilli</taxon>
        <taxon>Bacillales</taxon>
        <taxon>Bacillaceae</taxon>
        <taxon>Bacillus</taxon>
        <taxon>Bacillus cereus group</taxon>
    </lineage>
</organism>
<proteinExistence type="inferred from homology"/>
<comment type="function">
    <text evidence="1">Promotes RNA polymerase assembly. Latches the N- and C-terminal regions of the beta' subunit thereby facilitating its interaction with the beta and alpha subunits.</text>
</comment>
<comment type="catalytic activity">
    <reaction evidence="1">
        <text>RNA(n) + a ribonucleoside 5'-triphosphate = RNA(n+1) + diphosphate</text>
        <dbReference type="Rhea" id="RHEA:21248"/>
        <dbReference type="Rhea" id="RHEA-COMP:14527"/>
        <dbReference type="Rhea" id="RHEA-COMP:17342"/>
        <dbReference type="ChEBI" id="CHEBI:33019"/>
        <dbReference type="ChEBI" id="CHEBI:61557"/>
        <dbReference type="ChEBI" id="CHEBI:140395"/>
        <dbReference type="EC" id="2.7.7.6"/>
    </reaction>
</comment>
<comment type="subunit">
    <text evidence="1">The RNAP catalytic core consists of 2 alpha, 1 beta, 1 beta' and 1 omega subunit. When a sigma factor is associated with the core the holoenzyme is formed, which can initiate transcription.</text>
</comment>
<comment type="similarity">
    <text evidence="1">Belongs to the RNA polymerase subunit omega family.</text>
</comment>
<dbReference type="EC" id="2.7.7.6" evidence="1"/>
<dbReference type="EMBL" id="CP001186">
    <property type="protein sequence ID" value="ACK93831.1"/>
    <property type="molecule type" value="Genomic_DNA"/>
</dbReference>
<dbReference type="RefSeq" id="WP_000933962.1">
    <property type="nucleotide sequence ID" value="NC_011772.1"/>
</dbReference>
<dbReference type="SMR" id="B7IUM9"/>
<dbReference type="KEGG" id="bcg:BCG9842_B1274"/>
<dbReference type="HOGENOM" id="CLU_125406_6_0_9"/>
<dbReference type="Proteomes" id="UP000006744">
    <property type="component" value="Chromosome"/>
</dbReference>
<dbReference type="GO" id="GO:0000428">
    <property type="term" value="C:DNA-directed RNA polymerase complex"/>
    <property type="evidence" value="ECO:0007669"/>
    <property type="project" value="UniProtKB-KW"/>
</dbReference>
<dbReference type="GO" id="GO:0003677">
    <property type="term" value="F:DNA binding"/>
    <property type="evidence" value="ECO:0007669"/>
    <property type="project" value="UniProtKB-UniRule"/>
</dbReference>
<dbReference type="GO" id="GO:0003899">
    <property type="term" value="F:DNA-directed RNA polymerase activity"/>
    <property type="evidence" value="ECO:0007669"/>
    <property type="project" value="UniProtKB-UniRule"/>
</dbReference>
<dbReference type="GO" id="GO:0006351">
    <property type="term" value="P:DNA-templated transcription"/>
    <property type="evidence" value="ECO:0007669"/>
    <property type="project" value="UniProtKB-UniRule"/>
</dbReference>
<dbReference type="Gene3D" id="3.90.940.10">
    <property type="match status" value="1"/>
</dbReference>
<dbReference type="HAMAP" id="MF_00366">
    <property type="entry name" value="RNApol_bact_RpoZ"/>
    <property type="match status" value="1"/>
</dbReference>
<dbReference type="InterPro" id="IPR003716">
    <property type="entry name" value="DNA-dir_RNA_pol_omega"/>
</dbReference>
<dbReference type="InterPro" id="IPR006110">
    <property type="entry name" value="Pol_omega/Rpo6/RPB6"/>
</dbReference>
<dbReference type="InterPro" id="IPR036161">
    <property type="entry name" value="RPB6/omega-like_sf"/>
</dbReference>
<dbReference type="NCBIfam" id="TIGR00690">
    <property type="entry name" value="rpoZ"/>
    <property type="match status" value="1"/>
</dbReference>
<dbReference type="PANTHER" id="PTHR34476">
    <property type="entry name" value="DNA-DIRECTED RNA POLYMERASE SUBUNIT OMEGA"/>
    <property type="match status" value="1"/>
</dbReference>
<dbReference type="PANTHER" id="PTHR34476:SF1">
    <property type="entry name" value="DNA-DIRECTED RNA POLYMERASE SUBUNIT OMEGA"/>
    <property type="match status" value="1"/>
</dbReference>
<dbReference type="Pfam" id="PF01192">
    <property type="entry name" value="RNA_pol_Rpb6"/>
    <property type="match status" value="1"/>
</dbReference>
<dbReference type="SMART" id="SM01409">
    <property type="entry name" value="RNA_pol_Rpb6"/>
    <property type="match status" value="1"/>
</dbReference>
<dbReference type="SUPFAM" id="SSF63562">
    <property type="entry name" value="RPB6/omega subunit-like"/>
    <property type="match status" value="1"/>
</dbReference>
<reference key="1">
    <citation type="submission" date="2008-10" db="EMBL/GenBank/DDBJ databases">
        <title>Genome sequence of Bacillus cereus G9842.</title>
        <authorList>
            <person name="Dodson R.J."/>
            <person name="Durkin A.S."/>
            <person name="Rosovitz M.J."/>
            <person name="Rasko D.A."/>
            <person name="Hoffmaster A."/>
            <person name="Ravel J."/>
            <person name="Sutton G."/>
        </authorList>
    </citation>
    <scope>NUCLEOTIDE SEQUENCE [LARGE SCALE GENOMIC DNA]</scope>
    <source>
        <strain>G9842</strain>
    </source>
</reference>
<feature type="chain" id="PRO_1000121187" description="DNA-directed RNA polymerase subunit omega">
    <location>
        <begin position="1"/>
        <end position="70"/>
    </location>
</feature>
<name>RPOZ_BACC2</name>